<organism>
    <name type="scientific">Bacillus cereus (strain Q1)</name>
    <dbReference type="NCBI Taxonomy" id="361100"/>
    <lineage>
        <taxon>Bacteria</taxon>
        <taxon>Bacillati</taxon>
        <taxon>Bacillota</taxon>
        <taxon>Bacilli</taxon>
        <taxon>Bacillales</taxon>
        <taxon>Bacillaceae</taxon>
        <taxon>Bacillus</taxon>
        <taxon>Bacillus cereus group</taxon>
    </lineage>
</organism>
<name>KCY_BACCQ</name>
<keyword id="KW-0067">ATP-binding</keyword>
<keyword id="KW-0963">Cytoplasm</keyword>
<keyword id="KW-0418">Kinase</keyword>
<keyword id="KW-0547">Nucleotide-binding</keyword>
<keyword id="KW-0808">Transferase</keyword>
<feature type="chain" id="PRO_1000125273" description="Cytidylate kinase">
    <location>
        <begin position="1"/>
        <end position="225"/>
    </location>
</feature>
<feature type="binding site" evidence="1">
    <location>
        <begin position="11"/>
        <end position="19"/>
    </location>
    <ligand>
        <name>ATP</name>
        <dbReference type="ChEBI" id="CHEBI:30616"/>
    </ligand>
</feature>
<sequence>MDKRISIAIDGPAAAGKSTVAKVVAKKLSYVYIDTGAMYRTITYAALEQKVDIENEEQLMEVVKNVKIEFQQGENTQLVFLNGQDVSEVIRTPEVTNRVSIVAKHRLVREEMVRRQQELAEKGGVVMDGRDIGTHVLPDAEVKIFMLASVEERAERRHLENMNKGFDSNLEQLKEEIAQRDKLDSEREVSPLKKADDALELDTTSLSIEEVVQKIMGIVSGVFAK</sequence>
<evidence type="ECO:0000255" key="1">
    <source>
        <dbReference type="HAMAP-Rule" id="MF_00238"/>
    </source>
</evidence>
<gene>
    <name evidence="1" type="primary">cmk</name>
    <name type="ordered locus">BCQ_1566</name>
</gene>
<reference key="1">
    <citation type="journal article" date="2009" name="J. Bacteriol.">
        <title>Complete genome sequence of the extremophilic Bacillus cereus strain Q1 with industrial applications.</title>
        <authorList>
            <person name="Xiong Z."/>
            <person name="Jiang Y."/>
            <person name="Qi D."/>
            <person name="Lu H."/>
            <person name="Yang F."/>
            <person name="Yang J."/>
            <person name="Chen L."/>
            <person name="Sun L."/>
            <person name="Xu X."/>
            <person name="Xue Y."/>
            <person name="Zhu Y."/>
            <person name="Jin Q."/>
        </authorList>
    </citation>
    <scope>NUCLEOTIDE SEQUENCE [LARGE SCALE GENOMIC DNA]</scope>
    <source>
        <strain>Q1</strain>
    </source>
</reference>
<accession>B9IVL9</accession>
<protein>
    <recommendedName>
        <fullName evidence="1">Cytidylate kinase</fullName>
        <shortName evidence="1">CK</shortName>
        <ecNumber evidence="1">2.7.4.25</ecNumber>
    </recommendedName>
    <alternativeName>
        <fullName evidence="1">Cytidine monophosphate kinase</fullName>
        <shortName evidence="1">CMP kinase</shortName>
    </alternativeName>
</protein>
<dbReference type="EC" id="2.7.4.25" evidence="1"/>
<dbReference type="EMBL" id="CP000227">
    <property type="protein sequence ID" value="ACM11994.1"/>
    <property type="molecule type" value="Genomic_DNA"/>
</dbReference>
<dbReference type="SMR" id="B9IVL9"/>
<dbReference type="KEGG" id="bcq:BCQ_1566"/>
<dbReference type="HOGENOM" id="CLU_079959_0_2_9"/>
<dbReference type="Proteomes" id="UP000000441">
    <property type="component" value="Chromosome"/>
</dbReference>
<dbReference type="GO" id="GO:0005829">
    <property type="term" value="C:cytosol"/>
    <property type="evidence" value="ECO:0007669"/>
    <property type="project" value="TreeGrafter"/>
</dbReference>
<dbReference type="GO" id="GO:0005524">
    <property type="term" value="F:ATP binding"/>
    <property type="evidence" value="ECO:0007669"/>
    <property type="project" value="UniProtKB-UniRule"/>
</dbReference>
<dbReference type="GO" id="GO:0036430">
    <property type="term" value="F:CMP kinase activity"/>
    <property type="evidence" value="ECO:0007669"/>
    <property type="project" value="RHEA"/>
</dbReference>
<dbReference type="GO" id="GO:0036431">
    <property type="term" value="F:dCMP kinase activity"/>
    <property type="evidence" value="ECO:0007669"/>
    <property type="project" value="RHEA"/>
</dbReference>
<dbReference type="GO" id="GO:0015949">
    <property type="term" value="P:nucleobase-containing small molecule interconversion"/>
    <property type="evidence" value="ECO:0007669"/>
    <property type="project" value="TreeGrafter"/>
</dbReference>
<dbReference type="GO" id="GO:0006220">
    <property type="term" value="P:pyrimidine nucleotide metabolic process"/>
    <property type="evidence" value="ECO:0007669"/>
    <property type="project" value="UniProtKB-UniRule"/>
</dbReference>
<dbReference type="CDD" id="cd02020">
    <property type="entry name" value="CMPK"/>
    <property type="match status" value="1"/>
</dbReference>
<dbReference type="FunFam" id="3.40.50.300:FF:000484">
    <property type="entry name" value="Cytidylate kinase"/>
    <property type="match status" value="1"/>
</dbReference>
<dbReference type="Gene3D" id="3.40.50.300">
    <property type="entry name" value="P-loop containing nucleotide triphosphate hydrolases"/>
    <property type="match status" value="1"/>
</dbReference>
<dbReference type="HAMAP" id="MF_00238">
    <property type="entry name" value="Cytidyl_kinase_type1"/>
    <property type="match status" value="1"/>
</dbReference>
<dbReference type="InterPro" id="IPR003136">
    <property type="entry name" value="Cytidylate_kin"/>
</dbReference>
<dbReference type="InterPro" id="IPR011994">
    <property type="entry name" value="Cytidylate_kinase_dom"/>
</dbReference>
<dbReference type="InterPro" id="IPR027417">
    <property type="entry name" value="P-loop_NTPase"/>
</dbReference>
<dbReference type="NCBIfam" id="TIGR00017">
    <property type="entry name" value="cmk"/>
    <property type="match status" value="1"/>
</dbReference>
<dbReference type="PANTHER" id="PTHR21299:SF2">
    <property type="entry name" value="CYTIDYLATE KINASE"/>
    <property type="match status" value="1"/>
</dbReference>
<dbReference type="PANTHER" id="PTHR21299">
    <property type="entry name" value="CYTIDYLATE KINASE/PANTOATE-BETA-ALANINE LIGASE"/>
    <property type="match status" value="1"/>
</dbReference>
<dbReference type="Pfam" id="PF02224">
    <property type="entry name" value="Cytidylate_kin"/>
    <property type="match status" value="1"/>
</dbReference>
<dbReference type="SUPFAM" id="SSF52540">
    <property type="entry name" value="P-loop containing nucleoside triphosphate hydrolases"/>
    <property type="match status" value="1"/>
</dbReference>
<proteinExistence type="inferred from homology"/>
<comment type="catalytic activity">
    <reaction evidence="1">
        <text>CMP + ATP = CDP + ADP</text>
        <dbReference type="Rhea" id="RHEA:11600"/>
        <dbReference type="ChEBI" id="CHEBI:30616"/>
        <dbReference type="ChEBI" id="CHEBI:58069"/>
        <dbReference type="ChEBI" id="CHEBI:60377"/>
        <dbReference type="ChEBI" id="CHEBI:456216"/>
        <dbReference type="EC" id="2.7.4.25"/>
    </reaction>
</comment>
<comment type="catalytic activity">
    <reaction evidence="1">
        <text>dCMP + ATP = dCDP + ADP</text>
        <dbReference type="Rhea" id="RHEA:25094"/>
        <dbReference type="ChEBI" id="CHEBI:30616"/>
        <dbReference type="ChEBI" id="CHEBI:57566"/>
        <dbReference type="ChEBI" id="CHEBI:58593"/>
        <dbReference type="ChEBI" id="CHEBI:456216"/>
        <dbReference type="EC" id="2.7.4.25"/>
    </reaction>
</comment>
<comment type="subcellular location">
    <subcellularLocation>
        <location evidence="1">Cytoplasm</location>
    </subcellularLocation>
</comment>
<comment type="similarity">
    <text evidence="1">Belongs to the cytidylate kinase family. Type 1 subfamily.</text>
</comment>